<sequence length="534" mass="61558">MDGVSPKFVLPETFDGVRMEITGQLGMIWELVKAPVIVPLLQLAVYICLLMSVMLLCERVYMGIVIVLVKLFWKKPDKRYKFEPIHDDEELGSSNFPVVLVQIPMFNEREVYKLSIGAACGLSWPSDRLVIQVLDDSTDPTVKQMVEVECQRWASKGINIRYQIRENRVGYKAGALKEGLKRSYVKHCEYVVIFDADFQPEPDFLRRSIPFLMHNPNIALVQARWRFVNSDECLLTRMQEMSLDYHFTVEQEVGSSTHAFFGFNGTAGIWRIAAINEAGGWKDRTTVEDMDLAVRASLRGWKFLYLGDLQVKSELPSTFRAFRFQQHRWSCGPANLFRKMVMEIVRNKKVRFWKKVYVIYSFFFVRKIIAHWVTFCFYCVVLPLTILVPEVKVPIWGSVYIPSIITILNSVGTPRSIHLLFYWILFENVMSLHRTKATLIGLFEAGRANEWVVTAKLGSGQSAKGNTKGIKRFPRIFKLPDRLNTLELGFAAFLFVCGCYDFVHGKNNYFIYLFLQTMSFFISGLGWIGTYVPS</sequence>
<accession>Q9FNI7</accession>
<protein>
    <recommendedName>
        <fullName evidence="4">Glucomannan 4-beta-mannosyltransferase 2</fullName>
        <ecNumber evidence="2">2.4.1.32</ecNumber>
    </recommendedName>
    <alternativeName>
        <fullName evidence="3">Cellulose synthase-like protein A2</fullName>
        <shortName evidence="3">AtCslA2</shortName>
    </alternativeName>
    <alternativeName>
        <fullName evidence="4">Glucomannan synthase</fullName>
    </alternativeName>
    <alternativeName>
        <fullName evidence="4">Mannan synthase 2</fullName>
    </alternativeName>
</protein>
<name>CSLA2_ARATH</name>
<evidence type="ECO:0000255" key="1"/>
<evidence type="ECO:0000269" key="2">
    <source>
    </source>
</evidence>
<evidence type="ECO:0000303" key="3">
    <source>
    </source>
</evidence>
<evidence type="ECO:0000305" key="4"/>
<organism>
    <name type="scientific">Arabidopsis thaliana</name>
    <name type="common">Mouse-ear cress</name>
    <dbReference type="NCBI Taxonomy" id="3702"/>
    <lineage>
        <taxon>Eukaryota</taxon>
        <taxon>Viridiplantae</taxon>
        <taxon>Streptophyta</taxon>
        <taxon>Embryophyta</taxon>
        <taxon>Tracheophyta</taxon>
        <taxon>Spermatophyta</taxon>
        <taxon>Magnoliopsida</taxon>
        <taxon>eudicotyledons</taxon>
        <taxon>Gunneridae</taxon>
        <taxon>Pentapetalae</taxon>
        <taxon>rosids</taxon>
        <taxon>malvids</taxon>
        <taxon>Brassicales</taxon>
        <taxon>Brassicaceae</taxon>
        <taxon>Camelineae</taxon>
        <taxon>Arabidopsis</taxon>
    </lineage>
</organism>
<keyword id="KW-0961">Cell wall biogenesis/degradation</keyword>
<keyword id="KW-0328">Glycosyltransferase</keyword>
<keyword id="KW-0333">Golgi apparatus</keyword>
<keyword id="KW-0472">Membrane</keyword>
<keyword id="KW-1185">Reference proteome</keyword>
<keyword id="KW-0808">Transferase</keyword>
<keyword id="KW-0812">Transmembrane</keyword>
<keyword id="KW-1133">Transmembrane helix</keyword>
<dbReference type="EC" id="2.4.1.32" evidence="2"/>
<dbReference type="EMBL" id="AB006699">
    <property type="protein sequence ID" value="BAB11680.1"/>
    <property type="molecule type" value="Genomic_DNA"/>
</dbReference>
<dbReference type="EMBL" id="CP002688">
    <property type="protein sequence ID" value="AED93069.1"/>
    <property type="molecule type" value="Genomic_DNA"/>
</dbReference>
<dbReference type="EMBL" id="AY058158">
    <property type="protein sequence ID" value="AAL25573.1"/>
    <property type="molecule type" value="mRNA"/>
</dbReference>
<dbReference type="EMBL" id="AY059852">
    <property type="protein sequence ID" value="AAL24334.1"/>
    <property type="molecule type" value="mRNA"/>
</dbReference>
<dbReference type="EMBL" id="AY093293">
    <property type="protein sequence ID" value="AAM13292.1"/>
    <property type="molecule type" value="mRNA"/>
</dbReference>
<dbReference type="SMR" id="Q9FNI7"/>
<dbReference type="FunCoup" id="Q9FNI7">
    <property type="interactions" value="102"/>
</dbReference>
<dbReference type="STRING" id="3702.Q9FNI7"/>
<dbReference type="CAZy" id="GT2">
    <property type="family name" value="Glycosyltransferase Family 2"/>
</dbReference>
<dbReference type="iPTMnet" id="Q9FNI7"/>
<dbReference type="PaxDb" id="3702-AT5G22740.1"/>
<dbReference type="ProteomicsDB" id="220368"/>
<dbReference type="EnsemblPlants" id="AT5G22740.1">
    <property type="protein sequence ID" value="AT5G22740.1"/>
    <property type="gene ID" value="AT5G22740"/>
</dbReference>
<dbReference type="GeneID" id="832337"/>
<dbReference type="Gramene" id="AT5G22740.1">
    <property type="protein sequence ID" value="AT5G22740.1"/>
    <property type="gene ID" value="AT5G22740"/>
</dbReference>
<dbReference type="KEGG" id="ath:AT5G22740"/>
<dbReference type="Araport" id="AT5G22740"/>
<dbReference type="TAIR" id="AT5G22740">
    <property type="gene designation" value="CSLA02"/>
</dbReference>
<dbReference type="eggNOG" id="ENOG502QR7J">
    <property type="taxonomic scope" value="Eukaryota"/>
</dbReference>
<dbReference type="HOGENOM" id="CLU_012856_2_0_1"/>
<dbReference type="InParanoid" id="Q9FNI7"/>
<dbReference type="OMA" id="YICVYDA"/>
<dbReference type="PhylomeDB" id="Q9FNI7"/>
<dbReference type="BioCyc" id="ARA:AT5G22740-MONOMER"/>
<dbReference type="CD-CODE" id="4299E36E">
    <property type="entry name" value="Nucleolus"/>
</dbReference>
<dbReference type="PRO" id="PR:Q9FNI7"/>
<dbReference type="Proteomes" id="UP000006548">
    <property type="component" value="Chromosome 5"/>
</dbReference>
<dbReference type="ExpressionAtlas" id="Q9FNI7">
    <property type="expression patterns" value="baseline and differential"/>
</dbReference>
<dbReference type="GO" id="GO:0005794">
    <property type="term" value="C:Golgi apparatus"/>
    <property type="evidence" value="ECO:0000314"/>
    <property type="project" value="TAIR"/>
</dbReference>
<dbReference type="GO" id="GO:0005797">
    <property type="term" value="C:Golgi medial cisterna"/>
    <property type="evidence" value="ECO:0007005"/>
    <property type="project" value="TAIR"/>
</dbReference>
<dbReference type="GO" id="GO:0000139">
    <property type="term" value="C:Golgi membrane"/>
    <property type="evidence" value="ECO:0007669"/>
    <property type="project" value="UniProtKB-SubCell"/>
</dbReference>
<dbReference type="GO" id="GO:0047259">
    <property type="term" value="F:glucomannan 4-beta-mannosyltransferase activity"/>
    <property type="evidence" value="ECO:0000314"/>
    <property type="project" value="TAIR"/>
</dbReference>
<dbReference type="GO" id="GO:0051753">
    <property type="term" value="F:mannan synthase activity"/>
    <property type="evidence" value="ECO:0000314"/>
    <property type="project" value="TAIR"/>
</dbReference>
<dbReference type="GO" id="GO:0071555">
    <property type="term" value="P:cell wall organization"/>
    <property type="evidence" value="ECO:0007669"/>
    <property type="project" value="UniProtKB-KW"/>
</dbReference>
<dbReference type="GO" id="GO:0010192">
    <property type="term" value="P:mucilage biosynthetic process"/>
    <property type="evidence" value="ECO:0000315"/>
    <property type="project" value="TAIR"/>
</dbReference>
<dbReference type="GO" id="GO:0048359">
    <property type="term" value="P:mucilage metabolic process involved in seed coat development"/>
    <property type="evidence" value="ECO:0000315"/>
    <property type="project" value="TAIR"/>
</dbReference>
<dbReference type="CDD" id="cd06437">
    <property type="entry name" value="CESA_CaSu_A2"/>
    <property type="match status" value="1"/>
</dbReference>
<dbReference type="FunFam" id="3.90.550.10:FF:000015">
    <property type="entry name" value="Glucomannan 4-beta-mannosyltransferase 9"/>
    <property type="match status" value="1"/>
</dbReference>
<dbReference type="Gene3D" id="3.90.550.10">
    <property type="entry name" value="Spore Coat Polysaccharide Biosynthesis Protein SpsA, Chain A"/>
    <property type="match status" value="1"/>
</dbReference>
<dbReference type="InterPro" id="IPR001173">
    <property type="entry name" value="Glyco_trans_2-like"/>
</dbReference>
<dbReference type="InterPro" id="IPR029044">
    <property type="entry name" value="Nucleotide-diphossugar_trans"/>
</dbReference>
<dbReference type="PANTHER" id="PTHR32044:SF17">
    <property type="entry name" value="GLUCOMANNAN 4-BETA-MANNOSYLTRANSFERASE 2"/>
    <property type="match status" value="1"/>
</dbReference>
<dbReference type="PANTHER" id="PTHR32044">
    <property type="entry name" value="GLUCOMANNAN 4-BETA-MANNOSYLTRANSFERASE 9"/>
    <property type="match status" value="1"/>
</dbReference>
<dbReference type="Pfam" id="PF13632">
    <property type="entry name" value="Glyco_trans_2_3"/>
    <property type="match status" value="1"/>
</dbReference>
<dbReference type="SUPFAM" id="SSF53448">
    <property type="entry name" value="Nucleotide-diphospho-sugar transferases"/>
    <property type="match status" value="1"/>
</dbReference>
<feature type="chain" id="PRO_0000319327" description="Glucomannan 4-beta-mannosyltransferase 2">
    <location>
        <begin position="1"/>
        <end position="534"/>
    </location>
</feature>
<feature type="transmembrane region" description="Helical" evidence="1">
    <location>
        <begin position="36"/>
        <end position="56"/>
    </location>
</feature>
<feature type="transmembrane region" description="Helical" evidence="1">
    <location>
        <begin position="368"/>
        <end position="388"/>
    </location>
</feature>
<feature type="transmembrane region" description="Helical" evidence="1">
    <location>
        <begin position="404"/>
        <end position="426"/>
    </location>
</feature>
<feature type="transmembrane region" description="Helical" evidence="1">
    <location>
        <begin position="483"/>
        <end position="503"/>
    </location>
</feature>
<feature type="transmembrane region" description="Helical" evidence="1">
    <location>
        <begin position="509"/>
        <end position="529"/>
    </location>
</feature>
<feature type="active site" evidence="1">
    <location>
        <position position="136"/>
    </location>
</feature>
<feature type="active site" evidence="1">
    <location>
        <position position="289"/>
    </location>
</feature>
<feature type="binding site" evidence="1">
    <location>
        <position position="195"/>
    </location>
    <ligand>
        <name>substrate</name>
    </ligand>
</feature>
<feature type="binding site" evidence="1">
    <location>
        <position position="197"/>
    </location>
    <ligand>
        <name>substrate</name>
    </ligand>
</feature>
<reference key="1">
    <citation type="journal article" date="1997" name="DNA Res.">
        <title>Structural analysis of Arabidopsis thaliana chromosome 5. II. Sequence features of the regions of 1,044,062 bp covered by thirteen physically assigned P1 clones.</title>
        <authorList>
            <person name="Kotani H."/>
            <person name="Nakamura Y."/>
            <person name="Sato S."/>
            <person name="Kaneko T."/>
            <person name="Asamizu E."/>
            <person name="Miyajima N."/>
            <person name="Tabata S."/>
        </authorList>
    </citation>
    <scope>NUCLEOTIDE SEQUENCE [LARGE SCALE GENOMIC DNA]</scope>
    <source>
        <strain>cv. Columbia</strain>
    </source>
</reference>
<reference key="2">
    <citation type="journal article" date="2017" name="Plant J.">
        <title>Araport11: a complete reannotation of the Arabidopsis thaliana reference genome.</title>
        <authorList>
            <person name="Cheng C.Y."/>
            <person name="Krishnakumar V."/>
            <person name="Chan A.P."/>
            <person name="Thibaud-Nissen F."/>
            <person name="Schobel S."/>
            <person name="Town C.D."/>
        </authorList>
    </citation>
    <scope>GENOME REANNOTATION</scope>
    <source>
        <strain>cv. Columbia</strain>
    </source>
</reference>
<reference key="3">
    <citation type="journal article" date="2003" name="Science">
        <title>Empirical analysis of transcriptional activity in the Arabidopsis genome.</title>
        <authorList>
            <person name="Yamada K."/>
            <person name="Lim J."/>
            <person name="Dale J.M."/>
            <person name="Chen H."/>
            <person name="Shinn P."/>
            <person name="Palm C.J."/>
            <person name="Southwick A.M."/>
            <person name="Wu H.C."/>
            <person name="Kim C.J."/>
            <person name="Nguyen M."/>
            <person name="Pham P.K."/>
            <person name="Cheuk R.F."/>
            <person name="Karlin-Newmann G."/>
            <person name="Liu S.X."/>
            <person name="Lam B."/>
            <person name="Sakano H."/>
            <person name="Wu T."/>
            <person name="Yu G."/>
            <person name="Miranda M."/>
            <person name="Quach H.L."/>
            <person name="Tripp M."/>
            <person name="Chang C.H."/>
            <person name="Lee J.M."/>
            <person name="Toriumi M.J."/>
            <person name="Chan M.M."/>
            <person name="Tang C.C."/>
            <person name="Onodera C.S."/>
            <person name="Deng J.M."/>
            <person name="Akiyama K."/>
            <person name="Ansari Y."/>
            <person name="Arakawa T."/>
            <person name="Banh J."/>
            <person name="Banno F."/>
            <person name="Bowser L."/>
            <person name="Brooks S.Y."/>
            <person name="Carninci P."/>
            <person name="Chao Q."/>
            <person name="Choy N."/>
            <person name="Enju A."/>
            <person name="Goldsmith A.D."/>
            <person name="Gurjal M."/>
            <person name="Hansen N.F."/>
            <person name="Hayashizaki Y."/>
            <person name="Johnson-Hopson C."/>
            <person name="Hsuan V.W."/>
            <person name="Iida K."/>
            <person name="Karnes M."/>
            <person name="Khan S."/>
            <person name="Koesema E."/>
            <person name="Ishida J."/>
            <person name="Jiang P.X."/>
            <person name="Jones T."/>
            <person name="Kawai J."/>
            <person name="Kamiya A."/>
            <person name="Meyers C."/>
            <person name="Nakajima M."/>
            <person name="Narusaka M."/>
            <person name="Seki M."/>
            <person name="Sakurai T."/>
            <person name="Satou M."/>
            <person name="Tamse R."/>
            <person name="Vaysberg M."/>
            <person name="Wallender E.K."/>
            <person name="Wong C."/>
            <person name="Yamamura Y."/>
            <person name="Yuan S."/>
            <person name="Shinozaki K."/>
            <person name="Davis R.W."/>
            <person name="Theologis A."/>
            <person name="Ecker J.R."/>
        </authorList>
    </citation>
    <scope>NUCLEOTIDE SEQUENCE [LARGE SCALE MRNA]</scope>
    <source>
        <strain>cv. Columbia</strain>
    </source>
</reference>
<reference key="4">
    <citation type="journal article" date="2000" name="Plant Physiol.">
        <title>The cellulose synthase superfamily.</title>
        <authorList>
            <person name="Richmond T.A."/>
            <person name="Somerville C.R."/>
        </authorList>
    </citation>
    <scope>GENE FAMILY</scope>
    <scope>NOMENCLATURE</scope>
</reference>
<reference key="5">
    <citation type="journal article" date="2005" name="Proc. Natl. Acad. Sci. U.S.A.">
        <title>Expression of cellulose synthase-like (Csl) genes in insect cells reveals that CslA family members encode mannan synthases.</title>
        <authorList>
            <person name="Liepman A.H."/>
            <person name="Wilkerson C.G."/>
            <person name="Keegstra K."/>
        </authorList>
    </citation>
    <scope>FUNCTION</scope>
    <scope>CATALYTIC ACTIVITY</scope>
</reference>
<comment type="function">
    <text evidence="2">Possesses glucomannan synthase and mannan synthase activities in vitro. Mannan synthase consists of a 4-beta-mannosyltransferase activity on mannan using GDP-mannose. The beta-1,4-mannan product is the backbone for galactomannan synthesis by galactomannan galactosyltransferase. Galactomannan is a noncellulosic polysaccharides of plant cell wall.</text>
</comment>
<comment type="catalytic activity">
    <reaction evidence="2">
        <text>GDP-mannose + (glucomannan)n = GDP + (glucomannan)n+1.</text>
        <dbReference type="EC" id="2.4.1.32"/>
    </reaction>
</comment>
<comment type="subcellular location">
    <subcellularLocation>
        <location evidence="4">Golgi apparatus membrane</location>
        <topology evidence="4">Multi-pass membrane protein</topology>
    </subcellularLocation>
</comment>
<comment type="similarity">
    <text evidence="4">Belongs to the glycosyltransferase 2 family. Plant cellulose synthase-like A subfamily.</text>
</comment>
<gene>
    <name evidence="3" type="primary">CSLA2</name>
    <name type="ordered locus">At5g22740</name>
    <name type="ORF">MDJ22.16</name>
</gene>
<proteinExistence type="evidence at protein level"/>